<sequence>MRLSAFAPAKVNLFLHVGGPDGEGYHPISSLMVFADVGDRVNLQPADAPAFETSGPFGDQIPAGGDNLVVRAGQAFHRRLGGPVPPYRLILEKHLPIAAGLGGGSSDAGAALKLLRDALAPALSDDDLEALAASLGADGAACLRARALIAEGRGERLSPAPRLPELNAVLVNPGAPSPTGAVYRAYDAGVHPDGAAMPPMPDHLESAEEAAAWLAFATRNDLEAPAVRLEPHIGEVLDVLRGEPESLLVRMSGSGATCFALCASDIEAEGLAERLETMRPDWWVRRCRLS</sequence>
<dbReference type="EC" id="2.7.1.148" evidence="1"/>
<dbReference type="EMBL" id="CP001340">
    <property type="protein sequence ID" value="ACL94862.1"/>
    <property type="molecule type" value="Genomic_DNA"/>
</dbReference>
<dbReference type="RefSeq" id="WP_012640212.1">
    <property type="nucleotide sequence ID" value="NC_011916.1"/>
</dbReference>
<dbReference type="RefSeq" id="YP_002516770.1">
    <property type="nucleotide sequence ID" value="NC_011916.1"/>
</dbReference>
<dbReference type="SMR" id="B8H510"/>
<dbReference type="GeneID" id="7331855"/>
<dbReference type="KEGG" id="ccs:CCNA_01397"/>
<dbReference type="PATRIC" id="fig|565050.3.peg.1383"/>
<dbReference type="HOGENOM" id="CLU_053057_1_0_5"/>
<dbReference type="OrthoDB" id="9809438at2"/>
<dbReference type="PhylomeDB" id="B8H510"/>
<dbReference type="UniPathway" id="UPA00056">
    <property type="reaction ID" value="UER00094"/>
</dbReference>
<dbReference type="Proteomes" id="UP000001364">
    <property type="component" value="Chromosome"/>
</dbReference>
<dbReference type="GO" id="GO:0050515">
    <property type="term" value="F:4-(cytidine 5'-diphospho)-2-C-methyl-D-erythritol kinase activity"/>
    <property type="evidence" value="ECO:0007669"/>
    <property type="project" value="UniProtKB-UniRule"/>
</dbReference>
<dbReference type="GO" id="GO:0005524">
    <property type="term" value="F:ATP binding"/>
    <property type="evidence" value="ECO:0007669"/>
    <property type="project" value="UniProtKB-UniRule"/>
</dbReference>
<dbReference type="GO" id="GO:0019288">
    <property type="term" value="P:isopentenyl diphosphate biosynthetic process, methylerythritol 4-phosphate pathway"/>
    <property type="evidence" value="ECO:0007669"/>
    <property type="project" value="UniProtKB-UniRule"/>
</dbReference>
<dbReference type="GO" id="GO:0016114">
    <property type="term" value="P:terpenoid biosynthetic process"/>
    <property type="evidence" value="ECO:0007669"/>
    <property type="project" value="InterPro"/>
</dbReference>
<dbReference type="Gene3D" id="3.30.230.10">
    <property type="match status" value="1"/>
</dbReference>
<dbReference type="Gene3D" id="3.30.70.890">
    <property type="entry name" value="GHMP kinase, C-terminal domain"/>
    <property type="match status" value="1"/>
</dbReference>
<dbReference type="HAMAP" id="MF_00061">
    <property type="entry name" value="IspE"/>
    <property type="match status" value="1"/>
</dbReference>
<dbReference type="InterPro" id="IPR013750">
    <property type="entry name" value="GHMP_kinase_C_dom"/>
</dbReference>
<dbReference type="InterPro" id="IPR036554">
    <property type="entry name" value="GHMP_kinase_C_sf"/>
</dbReference>
<dbReference type="InterPro" id="IPR006204">
    <property type="entry name" value="GHMP_kinase_N_dom"/>
</dbReference>
<dbReference type="InterPro" id="IPR004424">
    <property type="entry name" value="IspE"/>
</dbReference>
<dbReference type="InterPro" id="IPR020568">
    <property type="entry name" value="Ribosomal_Su5_D2-typ_SF"/>
</dbReference>
<dbReference type="InterPro" id="IPR014721">
    <property type="entry name" value="Ribsml_uS5_D2-typ_fold_subgr"/>
</dbReference>
<dbReference type="NCBIfam" id="TIGR00154">
    <property type="entry name" value="ispE"/>
    <property type="match status" value="1"/>
</dbReference>
<dbReference type="NCBIfam" id="NF011202">
    <property type="entry name" value="PRK14608.1"/>
    <property type="match status" value="1"/>
</dbReference>
<dbReference type="PANTHER" id="PTHR43527">
    <property type="entry name" value="4-DIPHOSPHOCYTIDYL-2-C-METHYL-D-ERYTHRITOL KINASE, CHLOROPLASTIC"/>
    <property type="match status" value="1"/>
</dbReference>
<dbReference type="PANTHER" id="PTHR43527:SF2">
    <property type="entry name" value="4-DIPHOSPHOCYTIDYL-2-C-METHYL-D-ERYTHRITOL KINASE, CHLOROPLASTIC"/>
    <property type="match status" value="1"/>
</dbReference>
<dbReference type="Pfam" id="PF08544">
    <property type="entry name" value="GHMP_kinases_C"/>
    <property type="match status" value="1"/>
</dbReference>
<dbReference type="Pfam" id="PF00288">
    <property type="entry name" value="GHMP_kinases_N"/>
    <property type="match status" value="1"/>
</dbReference>
<dbReference type="PIRSF" id="PIRSF010376">
    <property type="entry name" value="IspE"/>
    <property type="match status" value="1"/>
</dbReference>
<dbReference type="SUPFAM" id="SSF55060">
    <property type="entry name" value="GHMP Kinase, C-terminal domain"/>
    <property type="match status" value="1"/>
</dbReference>
<dbReference type="SUPFAM" id="SSF54211">
    <property type="entry name" value="Ribosomal protein S5 domain 2-like"/>
    <property type="match status" value="1"/>
</dbReference>
<organism>
    <name type="scientific">Caulobacter vibrioides (strain NA1000 / CB15N)</name>
    <name type="common">Caulobacter crescentus</name>
    <dbReference type="NCBI Taxonomy" id="565050"/>
    <lineage>
        <taxon>Bacteria</taxon>
        <taxon>Pseudomonadati</taxon>
        <taxon>Pseudomonadota</taxon>
        <taxon>Alphaproteobacteria</taxon>
        <taxon>Caulobacterales</taxon>
        <taxon>Caulobacteraceae</taxon>
        <taxon>Caulobacter</taxon>
    </lineage>
</organism>
<name>ISPE_CAUVN</name>
<evidence type="ECO:0000255" key="1">
    <source>
        <dbReference type="HAMAP-Rule" id="MF_00061"/>
    </source>
</evidence>
<feature type="chain" id="PRO_1000190679" description="4-diphosphocytidyl-2-C-methyl-D-erythritol kinase">
    <location>
        <begin position="1"/>
        <end position="290"/>
    </location>
</feature>
<feature type="active site" evidence="1">
    <location>
        <position position="10"/>
    </location>
</feature>
<feature type="active site" evidence="1">
    <location>
        <position position="138"/>
    </location>
</feature>
<feature type="binding site" evidence="1">
    <location>
        <begin position="96"/>
        <end position="106"/>
    </location>
    <ligand>
        <name>ATP</name>
        <dbReference type="ChEBI" id="CHEBI:30616"/>
    </ligand>
</feature>
<protein>
    <recommendedName>
        <fullName evidence="1">4-diphosphocytidyl-2-C-methyl-D-erythritol kinase</fullName>
        <shortName evidence="1">CMK</shortName>
        <ecNumber evidence="1">2.7.1.148</ecNumber>
    </recommendedName>
    <alternativeName>
        <fullName evidence="1">4-(cytidine-5'-diphospho)-2-C-methyl-D-erythritol kinase</fullName>
    </alternativeName>
</protein>
<accession>B8H510</accession>
<keyword id="KW-0067">ATP-binding</keyword>
<keyword id="KW-0414">Isoprene biosynthesis</keyword>
<keyword id="KW-0418">Kinase</keyword>
<keyword id="KW-0547">Nucleotide-binding</keyword>
<keyword id="KW-1185">Reference proteome</keyword>
<keyword id="KW-0808">Transferase</keyword>
<proteinExistence type="inferred from homology"/>
<reference key="1">
    <citation type="journal article" date="2010" name="J. Bacteriol.">
        <title>The genetic basis of laboratory adaptation in Caulobacter crescentus.</title>
        <authorList>
            <person name="Marks M.E."/>
            <person name="Castro-Rojas C.M."/>
            <person name="Teiling C."/>
            <person name="Du L."/>
            <person name="Kapatral V."/>
            <person name="Walunas T.L."/>
            <person name="Crosson S."/>
        </authorList>
    </citation>
    <scope>NUCLEOTIDE SEQUENCE [LARGE SCALE GENOMIC DNA]</scope>
    <source>
        <strain>NA1000 / CB15N</strain>
    </source>
</reference>
<gene>
    <name evidence="1" type="primary">ispE</name>
    <name type="ordered locus">CCNA_01397</name>
</gene>
<comment type="function">
    <text evidence="1">Catalyzes the phosphorylation of the position 2 hydroxy group of 4-diphosphocytidyl-2C-methyl-D-erythritol.</text>
</comment>
<comment type="catalytic activity">
    <reaction evidence="1">
        <text>4-CDP-2-C-methyl-D-erythritol + ATP = 4-CDP-2-C-methyl-D-erythritol 2-phosphate + ADP + H(+)</text>
        <dbReference type="Rhea" id="RHEA:18437"/>
        <dbReference type="ChEBI" id="CHEBI:15378"/>
        <dbReference type="ChEBI" id="CHEBI:30616"/>
        <dbReference type="ChEBI" id="CHEBI:57823"/>
        <dbReference type="ChEBI" id="CHEBI:57919"/>
        <dbReference type="ChEBI" id="CHEBI:456216"/>
        <dbReference type="EC" id="2.7.1.148"/>
    </reaction>
</comment>
<comment type="pathway">
    <text evidence="1">Isoprenoid biosynthesis; isopentenyl diphosphate biosynthesis via DXP pathway; isopentenyl diphosphate from 1-deoxy-D-xylulose 5-phosphate: step 3/6.</text>
</comment>
<comment type="similarity">
    <text evidence="1">Belongs to the GHMP kinase family. IspE subfamily.</text>
</comment>